<comment type="function">
    <text evidence="1">Binds 23S rRNA and is also seen to make contacts with the A and possibly P site tRNAs.</text>
</comment>
<comment type="subunit">
    <text evidence="1">Part of the 50S ribosomal subunit.</text>
</comment>
<comment type="similarity">
    <text evidence="1">Belongs to the universal ribosomal protein uL16 family.</text>
</comment>
<organism>
    <name type="scientific">Anaeromyxobacter dehalogenans (strain 2CP-C)</name>
    <dbReference type="NCBI Taxonomy" id="290397"/>
    <lineage>
        <taxon>Bacteria</taxon>
        <taxon>Pseudomonadati</taxon>
        <taxon>Myxococcota</taxon>
        <taxon>Myxococcia</taxon>
        <taxon>Myxococcales</taxon>
        <taxon>Cystobacterineae</taxon>
        <taxon>Anaeromyxobacteraceae</taxon>
        <taxon>Anaeromyxobacter</taxon>
    </lineage>
</organism>
<keyword id="KW-1185">Reference proteome</keyword>
<keyword id="KW-0687">Ribonucleoprotein</keyword>
<keyword id="KW-0689">Ribosomal protein</keyword>
<keyword id="KW-0694">RNA-binding</keyword>
<keyword id="KW-0699">rRNA-binding</keyword>
<keyword id="KW-0820">tRNA-binding</keyword>
<proteinExistence type="inferred from homology"/>
<gene>
    <name evidence="1" type="primary">rplP</name>
    <name type="ordered locus">Adeh_1939</name>
</gene>
<dbReference type="EMBL" id="CP000251">
    <property type="protein sequence ID" value="ABC81710.1"/>
    <property type="molecule type" value="Genomic_DNA"/>
</dbReference>
<dbReference type="RefSeq" id="WP_011420993.1">
    <property type="nucleotide sequence ID" value="NC_007760.1"/>
</dbReference>
<dbReference type="SMR" id="Q2IJ83"/>
<dbReference type="STRING" id="290397.Adeh_1939"/>
<dbReference type="KEGG" id="ade:Adeh_1939"/>
<dbReference type="eggNOG" id="COG0197">
    <property type="taxonomic scope" value="Bacteria"/>
</dbReference>
<dbReference type="HOGENOM" id="CLU_078858_2_1_7"/>
<dbReference type="OrthoDB" id="9802589at2"/>
<dbReference type="Proteomes" id="UP000001935">
    <property type="component" value="Chromosome"/>
</dbReference>
<dbReference type="GO" id="GO:0022625">
    <property type="term" value="C:cytosolic large ribosomal subunit"/>
    <property type="evidence" value="ECO:0007669"/>
    <property type="project" value="TreeGrafter"/>
</dbReference>
<dbReference type="GO" id="GO:0019843">
    <property type="term" value="F:rRNA binding"/>
    <property type="evidence" value="ECO:0007669"/>
    <property type="project" value="UniProtKB-UniRule"/>
</dbReference>
<dbReference type="GO" id="GO:0003735">
    <property type="term" value="F:structural constituent of ribosome"/>
    <property type="evidence" value="ECO:0007669"/>
    <property type="project" value="InterPro"/>
</dbReference>
<dbReference type="GO" id="GO:0000049">
    <property type="term" value="F:tRNA binding"/>
    <property type="evidence" value="ECO:0007669"/>
    <property type="project" value="UniProtKB-KW"/>
</dbReference>
<dbReference type="GO" id="GO:0006412">
    <property type="term" value="P:translation"/>
    <property type="evidence" value="ECO:0007669"/>
    <property type="project" value="UniProtKB-UniRule"/>
</dbReference>
<dbReference type="CDD" id="cd01433">
    <property type="entry name" value="Ribosomal_L16_L10e"/>
    <property type="match status" value="1"/>
</dbReference>
<dbReference type="FunFam" id="3.90.1170.10:FF:000001">
    <property type="entry name" value="50S ribosomal protein L16"/>
    <property type="match status" value="1"/>
</dbReference>
<dbReference type="Gene3D" id="3.90.1170.10">
    <property type="entry name" value="Ribosomal protein L10e/L16"/>
    <property type="match status" value="1"/>
</dbReference>
<dbReference type="HAMAP" id="MF_01342">
    <property type="entry name" value="Ribosomal_uL16"/>
    <property type="match status" value="1"/>
</dbReference>
<dbReference type="InterPro" id="IPR047873">
    <property type="entry name" value="Ribosomal_uL16"/>
</dbReference>
<dbReference type="InterPro" id="IPR000114">
    <property type="entry name" value="Ribosomal_uL16_bact-type"/>
</dbReference>
<dbReference type="InterPro" id="IPR020798">
    <property type="entry name" value="Ribosomal_uL16_CS"/>
</dbReference>
<dbReference type="InterPro" id="IPR016180">
    <property type="entry name" value="Ribosomal_uL16_dom"/>
</dbReference>
<dbReference type="InterPro" id="IPR036920">
    <property type="entry name" value="Ribosomal_uL16_sf"/>
</dbReference>
<dbReference type="NCBIfam" id="TIGR01164">
    <property type="entry name" value="rplP_bact"/>
    <property type="match status" value="1"/>
</dbReference>
<dbReference type="PANTHER" id="PTHR12220">
    <property type="entry name" value="50S/60S RIBOSOMAL PROTEIN L16"/>
    <property type="match status" value="1"/>
</dbReference>
<dbReference type="PANTHER" id="PTHR12220:SF13">
    <property type="entry name" value="LARGE RIBOSOMAL SUBUNIT PROTEIN UL16M"/>
    <property type="match status" value="1"/>
</dbReference>
<dbReference type="Pfam" id="PF00252">
    <property type="entry name" value="Ribosomal_L16"/>
    <property type="match status" value="1"/>
</dbReference>
<dbReference type="PRINTS" id="PR00060">
    <property type="entry name" value="RIBOSOMALL16"/>
</dbReference>
<dbReference type="SUPFAM" id="SSF54686">
    <property type="entry name" value="Ribosomal protein L16p/L10e"/>
    <property type="match status" value="1"/>
</dbReference>
<dbReference type="PROSITE" id="PS00586">
    <property type="entry name" value="RIBOSOMAL_L16_1"/>
    <property type="match status" value="1"/>
</dbReference>
<protein>
    <recommendedName>
        <fullName evidence="1">Large ribosomal subunit protein uL16</fullName>
    </recommendedName>
    <alternativeName>
        <fullName evidence="2">50S ribosomal protein L16</fullName>
    </alternativeName>
</protein>
<reference key="1">
    <citation type="submission" date="2006-01" db="EMBL/GenBank/DDBJ databases">
        <title>Complete sequence of Anaeromyxobacter dehalogenans 2CP-C.</title>
        <authorList>
            <person name="Copeland A."/>
            <person name="Lucas S."/>
            <person name="Lapidus A."/>
            <person name="Barry K."/>
            <person name="Detter J.C."/>
            <person name="Glavina T."/>
            <person name="Hammon N."/>
            <person name="Israni S."/>
            <person name="Pitluck S."/>
            <person name="Brettin T."/>
            <person name="Bruce D."/>
            <person name="Han C."/>
            <person name="Tapia R."/>
            <person name="Gilna P."/>
            <person name="Kiss H."/>
            <person name="Schmutz J."/>
            <person name="Larimer F."/>
            <person name="Land M."/>
            <person name="Kyrpides N."/>
            <person name="Anderson I."/>
            <person name="Sanford R.A."/>
            <person name="Ritalahti K.M."/>
            <person name="Thomas H.S."/>
            <person name="Kirby J.R."/>
            <person name="Zhulin I.B."/>
            <person name="Loeffler F.E."/>
            <person name="Richardson P."/>
        </authorList>
    </citation>
    <scope>NUCLEOTIDE SEQUENCE [LARGE SCALE GENOMIC DNA]</scope>
    <source>
        <strain>2CP-C</strain>
    </source>
</reference>
<accession>Q2IJ83</accession>
<feature type="chain" id="PRO_0000251615" description="Large ribosomal subunit protein uL16">
    <location>
        <begin position="1"/>
        <end position="138"/>
    </location>
</feature>
<sequence>MLQPARTKYRKMQKGRMRGKAYRGSDLAQGEYGLQATECGRLTSRQIEAARVAITRYVKRGGKLWIRVFPDKPITKKPAETRMGTGKGNVEFYVAVVKPGRVLYELAGVDDASAKKAFHLAAHKLPVATKLVKRGETL</sequence>
<evidence type="ECO:0000255" key="1">
    <source>
        <dbReference type="HAMAP-Rule" id="MF_01342"/>
    </source>
</evidence>
<evidence type="ECO:0000305" key="2"/>
<name>RL16_ANADE</name>